<organism>
    <name type="scientific">Manduca sexta</name>
    <name type="common">Tobacco hawkmoth</name>
    <name type="synonym">Tobacco hornworm</name>
    <dbReference type="NCBI Taxonomy" id="7130"/>
    <lineage>
        <taxon>Eukaryota</taxon>
        <taxon>Metazoa</taxon>
        <taxon>Ecdysozoa</taxon>
        <taxon>Arthropoda</taxon>
        <taxon>Hexapoda</taxon>
        <taxon>Insecta</taxon>
        <taxon>Pterygota</taxon>
        <taxon>Neoptera</taxon>
        <taxon>Endopterygota</taxon>
        <taxon>Lepidoptera</taxon>
        <taxon>Glossata</taxon>
        <taxon>Ditrysia</taxon>
        <taxon>Bombycoidea</taxon>
        <taxon>Sphingidae</taxon>
        <taxon>Sphinginae</taxon>
        <taxon>Sphingini</taxon>
        <taxon>Manduca</taxon>
    </lineage>
</organism>
<dbReference type="EMBL" id="AF451838">
    <property type="protein sequence ID" value="AAL39064.1"/>
    <property type="molecule type" value="Genomic_DNA"/>
</dbReference>
<dbReference type="EMBL" id="AF071800">
    <property type="protein sequence ID" value="AAC24871.1"/>
    <property type="molecule type" value="mRNA"/>
</dbReference>
<dbReference type="PIR" id="S27233">
    <property type="entry name" value="S27233"/>
</dbReference>
<dbReference type="PDB" id="1V46">
    <property type="method" value="NMR"/>
    <property type="chains" value="A=45-53"/>
</dbReference>
<dbReference type="PDBsum" id="1V46"/>
<dbReference type="SMR" id="Q8WRC7"/>
<dbReference type="EnsemblMetazoa" id="XM_030178875.2">
    <property type="protein sequence ID" value="XP_030034735.1"/>
    <property type="gene ID" value="LOC115450766"/>
</dbReference>
<dbReference type="OrthoDB" id="6134464at2759"/>
<dbReference type="EvolutionaryTrace" id="Q8WRC7"/>
<dbReference type="GO" id="GO:0005576">
    <property type="term" value="C:extracellular region"/>
    <property type="evidence" value="ECO:0000314"/>
    <property type="project" value="UniProtKB"/>
</dbReference>
<dbReference type="GO" id="GO:0005184">
    <property type="term" value="F:neuropeptide hormone activity"/>
    <property type="evidence" value="ECO:0000314"/>
    <property type="project" value="UniProtKB"/>
</dbReference>
<dbReference type="GO" id="GO:0007218">
    <property type="term" value="P:neuropeptide signaling pathway"/>
    <property type="evidence" value="ECO:0007669"/>
    <property type="project" value="UniProtKB-KW"/>
</dbReference>
<dbReference type="GO" id="GO:0045823">
    <property type="term" value="P:positive regulation of heart contraction"/>
    <property type="evidence" value="ECO:0000314"/>
    <property type="project" value="UniProtKB"/>
</dbReference>
<dbReference type="InterPro" id="IPR024276">
    <property type="entry name" value="CCAP"/>
</dbReference>
<dbReference type="Pfam" id="PF11105">
    <property type="entry name" value="CCAP"/>
    <property type="match status" value="1"/>
</dbReference>
<gene>
    <name evidence="8" type="primary">CCAP</name>
</gene>
<evidence type="ECO:0000255" key="1"/>
<evidence type="ECO:0000269" key="2">
    <source>
    </source>
</evidence>
<evidence type="ECO:0000269" key="3">
    <source>
    </source>
</evidence>
<evidence type="ECO:0000269" key="4">
    <source>
    </source>
</evidence>
<evidence type="ECO:0000269" key="5">
    <source>
    </source>
</evidence>
<evidence type="ECO:0000305" key="6"/>
<evidence type="ECO:0000312" key="7">
    <source>
        <dbReference type="EMBL" id="AAC24871.1"/>
    </source>
</evidence>
<evidence type="ECO:0000312" key="8">
    <source>
        <dbReference type="EMBL" id="AAL39064.1"/>
    </source>
</evidence>
<evidence type="ECO:0007829" key="9">
    <source>
        <dbReference type="PDB" id="1V46"/>
    </source>
</evidence>
<reference evidence="6 8" key="1">
    <citation type="journal article" date="2001" name="J. Exp. Biol.">
        <title>Identification, sequence and expression of a crustacean cardioactive peptide (CCAP) gene in the moth Manduca sexta.</title>
        <authorList>
            <person name="Loi P.K."/>
            <person name="Emmal S.A."/>
            <person name="Park Y."/>
            <person name="Tublitz N.J."/>
        </authorList>
    </citation>
    <scope>NUCLEOTIDE SEQUENCE</scope>
    <scope>TISSUE SPECIFICITY</scope>
    <source>
        <tissue evidence="2">Ventral nerve cord</tissue>
    </source>
</reference>
<reference evidence="6 7" key="2">
    <citation type="submission" date="1998-06" db="EMBL/GenBank/DDBJ databases">
        <authorList>
            <person name="Emmal S.A."/>
            <person name="McGraw H.F."/>
            <person name="Loi P.K."/>
            <person name="Huesmann G."/>
            <person name="Cheung C.C."/>
            <person name="Tublitz N.J."/>
        </authorList>
    </citation>
    <scope>NUCLEOTIDE SEQUENCE OF 39-125</scope>
</reference>
<reference evidence="6" key="3">
    <citation type="journal article" date="1992" name="FEBS Lett.">
        <title>Primary structure of a cardioactive neuropeptide from the tobacco hawkmoth, Manduca sexta.</title>
        <authorList>
            <person name="Cheung C.C."/>
            <person name="Loi P.K."/>
            <person name="Sylwester A.W."/>
            <person name="Lee T.D."/>
            <person name="Tublitz N.J."/>
        </authorList>
    </citation>
    <scope>PROTEIN SEQUENCE OF 45-53</scope>
    <scope>MASS SPECTROMETRY</scope>
    <scope>DISULFIDE BONDS</scope>
    <scope>AMIDATION AT CYS-53</scope>
    <source>
        <tissue evidence="3">Ventral nerve cord</tissue>
    </source>
</reference>
<reference evidence="6" key="4">
    <citation type="journal article" date="1985" name="J. Exp. Biol.">
        <title>Insect cardioactive peptides. I. Distribution and molecular characteristics of two cardioacceleratory peptides in the tobacco hawkmoth, Manduca sexta.</title>
        <authorList>
            <person name="Tublitz N.J."/>
            <person name="Truman J.W."/>
        </authorList>
    </citation>
    <scope>FUNCTION</scope>
    <scope>TISSUE SPECIFICITY</scope>
    <scope>SUBCELLULAR LOCATION</scope>
    <source>
        <tissue evidence="5">Ventral nerve cord</tissue>
    </source>
</reference>
<reference evidence="6" key="5">
    <citation type="journal article" date="2003" name="Peptides">
        <title>Neuropeptides in perisympathetic organs of Manduca sexta: specific composition and changes during the development.</title>
        <authorList>
            <person name="Predel R."/>
            <person name="Herbert Z."/>
            <person name="Eckert M."/>
        </authorList>
    </citation>
    <scope>MASS SPECTROMETRY</scope>
    <scope>TISSUE SPECIFICITY</scope>
    <source>
        <tissue evidence="4">Ventral nerve cord</tissue>
    </source>
</reference>
<accession>Q8WRC7</accession>
<accession>O76492</accession>
<accession>P38556</accession>
<keyword id="KW-0002">3D-structure</keyword>
<keyword id="KW-0027">Amidation</keyword>
<keyword id="KW-0165">Cleavage on pair of basic residues</keyword>
<keyword id="KW-0903">Direct protein sequencing</keyword>
<keyword id="KW-1015">Disulfide bond</keyword>
<keyword id="KW-0372">Hormone</keyword>
<keyword id="KW-0527">Neuropeptide</keyword>
<keyword id="KW-0964">Secreted</keyword>
<keyword id="KW-0732">Signal</keyword>
<comment type="function">
    <text evidence="5">Cardioregulatory neurohormone that increases heart beat rate during adult wing inflation; has no effect on beat amplitude. The effect of CCAP is both ino- and chronotropic.</text>
</comment>
<comment type="subcellular location">
    <subcellularLocation>
        <location evidence="5">Secreted</location>
    </subcellularLocation>
</comment>
<comment type="tissue specificity">
    <text evidence="2 4 5">Abdominal perivisceral organ; major neurohemal release site. Expressed in 116 neurons in post-embryonic central nervous system. Nine pairs of cells are observed in the brain, 4.5 pairs in the subesophageal ganglion, three pairs in each thoracic ganglion (T1-T3), three pairs in the first abdominal ganglion (A1), five pairs each in the second to sixth abdominal ganglia (A2-A6) and 7.5 pairs in the terminal ganglion. Expressed in every ganglion in each post-embryonic stage, except in the thoracic ganglia of first- and second-instar larvae. Colocalizes with CAP2b in median neurosecretory cells during the last larval instar through to adults.</text>
</comment>
<comment type="mass spectrometry" mass="956.4" method="MALDI" evidence="3"/>
<comment type="mass spectrometry" mass="956.37" method="MALDI" evidence="4"/>
<sequence length="125" mass="14022">MTVSRVCLLLLVALVYLDCCYAASIPRNFDPRLSEEIVMAPKKRPFCNAFTGCGRKRSQGPPGMPAQDLRTKQYLDEEALGSILDSESAIDELSRQILSEAKLWEAIQEASAEIARRKQKEAYIQ</sequence>
<proteinExistence type="evidence at protein level"/>
<protein>
    <recommendedName>
        <fullName>Cardioactive peptide</fullName>
    </recommendedName>
    <alternativeName>
        <fullName>Cardioacceleratory peptide 2a</fullName>
    </alternativeName>
    <alternativeName>
        <fullName>Crustacean cardioactive peptide</fullName>
        <shortName>CCAP</shortName>
    </alternativeName>
</protein>
<name>CCAP_MANSE</name>
<feature type="signal peptide" evidence="1">
    <location>
        <begin position="1"/>
        <end position="22"/>
    </location>
</feature>
<feature type="propeptide" id="PRO_0000020854" evidence="1 3">
    <location>
        <begin position="23"/>
        <end position="42"/>
    </location>
</feature>
<feature type="peptide" id="PRO_0000020855" description="Cardioactive peptide">
    <location>
        <begin position="45"/>
        <end position="53"/>
    </location>
</feature>
<feature type="propeptide" id="PRO_0000020856" evidence="3">
    <location>
        <begin position="57"/>
        <end position="125"/>
    </location>
</feature>
<feature type="modified residue" description="Cysteine amide" evidence="3">
    <location>
        <position position="53"/>
    </location>
</feature>
<feature type="disulfide bond" evidence="3">
    <location>
        <begin position="47"/>
        <end position="53"/>
    </location>
</feature>
<feature type="strand" evidence="9">
    <location>
        <begin position="49"/>
        <end position="51"/>
    </location>
</feature>